<keyword id="KW-0030">Aminoacyl-tRNA synthetase</keyword>
<keyword id="KW-0067">ATP-binding</keyword>
<keyword id="KW-0963">Cytoplasm</keyword>
<keyword id="KW-0436">Ligase</keyword>
<keyword id="KW-0547">Nucleotide-binding</keyword>
<keyword id="KW-0648">Protein biosynthesis</keyword>
<dbReference type="EC" id="6.1.1.15" evidence="1"/>
<dbReference type="EMBL" id="CP000348">
    <property type="protein sequence ID" value="ABJ78468.1"/>
    <property type="molecule type" value="Genomic_DNA"/>
</dbReference>
<dbReference type="RefSeq" id="WP_011669753.1">
    <property type="nucleotide sequence ID" value="NC_008508.1"/>
</dbReference>
<dbReference type="SMR" id="Q053M7"/>
<dbReference type="KEGG" id="lbl:LBL_0927"/>
<dbReference type="HOGENOM" id="CLU_016739_0_0_12"/>
<dbReference type="GO" id="GO:0005829">
    <property type="term" value="C:cytosol"/>
    <property type="evidence" value="ECO:0007669"/>
    <property type="project" value="TreeGrafter"/>
</dbReference>
<dbReference type="GO" id="GO:0002161">
    <property type="term" value="F:aminoacyl-tRNA deacylase activity"/>
    <property type="evidence" value="ECO:0007669"/>
    <property type="project" value="InterPro"/>
</dbReference>
<dbReference type="GO" id="GO:0005524">
    <property type="term" value="F:ATP binding"/>
    <property type="evidence" value="ECO:0007669"/>
    <property type="project" value="UniProtKB-UniRule"/>
</dbReference>
<dbReference type="GO" id="GO:0004827">
    <property type="term" value="F:proline-tRNA ligase activity"/>
    <property type="evidence" value="ECO:0007669"/>
    <property type="project" value="UniProtKB-UniRule"/>
</dbReference>
<dbReference type="GO" id="GO:0006433">
    <property type="term" value="P:prolyl-tRNA aminoacylation"/>
    <property type="evidence" value="ECO:0007669"/>
    <property type="project" value="UniProtKB-UniRule"/>
</dbReference>
<dbReference type="CDD" id="cd04334">
    <property type="entry name" value="ProRS-INS"/>
    <property type="match status" value="1"/>
</dbReference>
<dbReference type="CDD" id="cd00861">
    <property type="entry name" value="ProRS_anticodon_short"/>
    <property type="match status" value="1"/>
</dbReference>
<dbReference type="CDD" id="cd00779">
    <property type="entry name" value="ProRS_core_prok"/>
    <property type="match status" value="1"/>
</dbReference>
<dbReference type="FunFam" id="3.30.930.10:FF:000065">
    <property type="entry name" value="Proline--tRNA ligase"/>
    <property type="match status" value="1"/>
</dbReference>
<dbReference type="FunFam" id="3.30.930.10:FF:000150">
    <property type="entry name" value="Proline--tRNA ligase"/>
    <property type="match status" value="1"/>
</dbReference>
<dbReference type="Gene3D" id="3.40.50.800">
    <property type="entry name" value="Anticodon-binding domain"/>
    <property type="match status" value="1"/>
</dbReference>
<dbReference type="Gene3D" id="3.30.930.10">
    <property type="entry name" value="Bira Bifunctional Protein, Domain 2"/>
    <property type="match status" value="2"/>
</dbReference>
<dbReference type="HAMAP" id="MF_01569">
    <property type="entry name" value="Pro_tRNA_synth_type1"/>
    <property type="match status" value="1"/>
</dbReference>
<dbReference type="InterPro" id="IPR002314">
    <property type="entry name" value="aa-tRNA-synt_IIb"/>
</dbReference>
<dbReference type="InterPro" id="IPR006195">
    <property type="entry name" value="aa-tRNA-synth_II"/>
</dbReference>
<dbReference type="InterPro" id="IPR045864">
    <property type="entry name" value="aa-tRNA-synth_II/BPL/LPL"/>
</dbReference>
<dbReference type="InterPro" id="IPR004154">
    <property type="entry name" value="Anticodon-bd"/>
</dbReference>
<dbReference type="InterPro" id="IPR036621">
    <property type="entry name" value="Anticodon-bd_dom_sf"/>
</dbReference>
<dbReference type="InterPro" id="IPR002316">
    <property type="entry name" value="Pro-tRNA-ligase_IIa"/>
</dbReference>
<dbReference type="InterPro" id="IPR004500">
    <property type="entry name" value="Pro-tRNA-synth_IIa_bac-type"/>
</dbReference>
<dbReference type="InterPro" id="IPR023717">
    <property type="entry name" value="Pro-tRNA-Synthase_IIa_type1"/>
</dbReference>
<dbReference type="InterPro" id="IPR050062">
    <property type="entry name" value="Pro-tRNA_synthetase"/>
</dbReference>
<dbReference type="InterPro" id="IPR044140">
    <property type="entry name" value="ProRS_anticodon_short"/>
</dbReference>
<dbReference type="InterPro" id="IPR033730">
    <property type="entry name" value="ProRS_core_prok"/>
</dbReference>
<dbReference type="InterPro" id="IPR036754">
    <property type="entry name" value="YbaK/aa-tRNA-synt-asso_dom_sf"/>
</dbReference>
<dbReference type="InterPro" id="IPR007214">
    <property type="entry name" value="YbaK/aa-tRNA-synth-assoc-dom"/>
</dbReference>
<dbReference type="NCBIfam" id="NF006625">
    <property type="entry name" value="PRK09194.1"/>
    <property type="match status" value="1"/>
</dbReference>
<dbReference type="NCBIfam" id="TIGR00409">
    <property type="entry name" value="proS_fam_II"/>
    <property type="match status" value="1"/>
</dbReference>
<dbReference type="PANTHER" id="PTHR42753">
    <property type="entry name" value="MITOCHONDRIAL RIBOSOME PROTEIN L39/PROLYL-TRNA LIGASE FAMILY MEMBER"/>
    <property type="match status" value="1"/>
</dbReference>
<dbReference type="PANTHER" id="PTHR42753:SF2">
    <property type="entry name" value="PROLINE--TRNA LIGASE"/>
    <property type="match status" value="1"/>
</dbReference>
<dbReference type="Pfam" id="PF03129">
    <property type="entry name" value="HGTP_anticodon"/>
    <property type="match status" value="1"/>
</dbReference>
<dbReference type="Pfam" id="PF00587">
    <property type="entry name" value="tRNA-synt_2b"/>
    <property type="match status" value="1"/>
</dbReference>
<dbReference type="Pfam" id="PF04073">
    <property type="entry name" value="tRNA_edit"/>
    <property type="match status" value="1"/>
</dbReference>
<dbReference type="PRINTS" id="PR01046">
    <property type="entry name" value="TRNASYNTHPRO"/>
</dbReference>
<dbReference type="SUPFAM" id="SSF52954">
    <property type="entry name" value="Class II aaRS ABD-related"/>
    <property type="match status" value="1"/>
</dbReference>
<dbReference type="SUPFAM" id="SSF55681">
    <property type="entry name" value="Class II aaRS and biotin synthetases"/>
    <property type="match status" value="1"/>
</dbReference>
<dbReference type="SUPFAM" id="SSF55826">
    <property type="entry name" value="YbaK/ProRS associated domain"/>
    <property type="match status" value="1"/>
</dbReference>
<dbReference type="PROSITE" id="PS50862">
    <property type="entry name" value="AA_TRNA_LIGASE_II"/>
    <property type="match status" value="1"/>
</dbReference>
<sequence>MKASKYILPTEKENPSDAVVASHRLMIRAGLARKSSAGLYFYLPLGLKILQKIKQIIREEMNKTGALEFDLPILTPSDFWEQSGRWTAMGKEMFRIKDRHDLSYALGPTHEESFSFLLKPLLKSYKDLPLNVYQIQTKFRDEIRPRFGVIRSREFIMKDAYSFHIDDVSLDETYQSMRAAYRKIFDRCGLKTIPVQADSGSMGGSASEEFMVVSPIGEETLLLCNSCGYSSNSEKTPLVLKKENVSSASVEKKEISTPGKKTIVEVSAFLGIPESTTIKAATLKSEKKKILVYLRGDLELNLHKLHSLLRIVDSEPMTDAEIRELGLVPGFIAPVAPNDKVKVLYDRSLQKDFPYVVASNKEDFHTQGFVLEKEVSGLPEFADVALAREGDLCPNCNAPLKAEKGIEVGHIFKLGEKYTKAFGIQVLDQNGKARTLTMGCYGIGVNRTMATVIEQRNDEKGIFWPISIAPFEVTLVSITKGEEQYSKAEEFYNVLKNENLEVFWDDRDVGPGFKLKDSELIGFPIRVTIGKKFFENGEISIYNRKADKEESFVFAGFENLIARVESLRQELFAELE</sequence>
<name>SYP_LEPBL</name>
<feature type="chain" id="PRO_0000288342" description="Proline--tRNA ligase">
    <location>
        <begin position="1"/>
        <end position="576"/>
    </location>
</feature>
<accession>Q053M7</accession>
<comment type="function">
    <text evidence="1">Catalyzes the attachment of proline to tRNA(Pro) in a two-step reaction: proline is first activated by ATP to form Pro-AMP and then transferred to the acceptor end of tRNA(Pro). As ProRS can inadvertently accommodate and process non-cognate amino acids such as alanine and cysteine, to avoid such errors it has two additional distinct editing activities against alanine. One activity is designated as 'pretransfer' editing and involves the tRNA(Pro)-independent hydrolysis of activated Ala-AMP. The other activity is designated 'posttransfer' editing and involves deacylation of mischarged Ala-tRNA(Pro). The misacylated Cys-tRNA(Pro) is not edited by ProRS.</text>
</comment>
<comment type="catalytic activity">
    <reaction evidence="1">
        <text>tRNA(Pro) + L-proline + ATP = L-prolyl-tRNA(Pro) + AMP + diphosphate</text>
        <dbReference type="Rhea" id="RHEA:14305"/>
        <dbReference type="Rhea" id="RHEA-COMP:9700"/>
        <dbReference type="Rhea" id="RHEA-COMP:9702"/>
        <dbReference type="ChEBI" id="CHEBI:30616"/>
        <dbReference type="ChEBI" id="CHEBI:33019"/>
        <dbReference type="ChEBI" id="CHEBI:60039"/>
        <dbReference type="ChEBI" id="CHEBI:78442"/>
        <dbReference type="ChEBI" id="CHEBI:78532"/>
        <dbReference type="ChEBI" id="CHEBI:456215"/>
        <dbReference type="EC" id="6.1.1.15"/>
    </reaction>
</comment>
<comment type="subunit">
    <text evidence="1">Homodimer.</text>
</comment>
<comment type="subcellular location">
    <subcellularLocation>
        <location evidence="1">Cytoplasm</location>
    </subcellularLocation>
</comment>
<comment type="domain">
    <text evidence="1">Consists of three domains: the N-terminal catalytic domain, the editing domain and the C-terminal anticodon-binding domain.</text>
</comment>
<comment type="similarity">
    <text evidence="1">Belongs to the class-II aminoacyl-tRNA synthetase family. ProS type 1 subfamily.</text>
</comment>
<organism>
    <name type="scientific">Leptospira borgpetersenii serovar Hardjo-bovis (strain L550)</name>
    <dbReference type="NCBI Taxonomy" id="355276"/>
    <lineage>
        <taxon>Bacteria</taxon>
        <taxon>Pseudomonadati</taxon>
        <taxon>Spirochaetota</taxon>
        <taxon>Spirochaetia</taxon>
        <taxon>Leptospirales</taxon>
        <taxon>Leptospiraceae</taxon>
        <taxon>Leptospira</taxon>
    </lineage>
</organism>
<reference key="1">
    <citation type="journal article" date="2006" name="Proc. Natl. Acad. Sci. U.S.A.">
        <title>Genome reduction in Leptospira borgpetersenii reflects limited transmission potential.</title>
        <authorList>
            <person name="Bulach D.M."/>
            <person name="Zuerner R.L."/>
            <person name="Wilson P."/>
            <person name="Seemann T."/>
            <person name="McGrath A."/>
            <person name="Cullen P.A."/>
            <person name="Davis J."/>
            <person name="Johnson M."/>
            <person name="Kuczek E."/>
            <person name="Alt D.P."/>
            <person name="Peterson-Burch B."/>
            <person name="Coppel R.L."/>
            <person name="Rood J.I."/>
            <person name="Davies J.K."/>
            <person name="Adler B."/>
        </authorList>
    </citation>
    <scope>NUCLEOTIDE SEQUENCE [LARGE SCALE GENOMIC DNA]</scope>
    <source>
        <strain>L550</strain>
    </source>
</reference>
<evidence type="ECO:0000255" key="1">
    <source>
        <dbReference type="HAMAP-Rule" id="MF_01569"/>
    </source>
</evidence>
<proteinExistence type="inferred from homology"/>
<gene>
    <name evidence="1" type="primary">proS</name>
    <name type="ordered locus">LBL_0927</name>
</gene>
<protein>
    <recommendedName>
        <fullName evidence="1">Proline--tRNA ligase</fullName>
        <ecNumber evidence="1">6.1.1.15</ecNumber>
    </recommendedName>
    <alternativeName>
        <fullName evidence="1">Prolyl-tRNA synthetase</fullName>
        <shortName evidence="1">ProRS</shortName>
    </alternativeName>
</protein>